<evidence type="ECO:0000250" key="1"/>
<evidence type="ECO:0000250" key="2">
    <source>
        <dbReference type="UniProtKB" id="P27467"/>
    </source>
</evidence>
<evidence type="ECO:0000250" key="3">
    <source>
        <dbReference type="UniProtKB" id="P28026"/>
    </source>
</evidence>
<evidence type="ECO:0000250" key="4">
    <source>
        <dbReference type="UniProtKB" id="P56704"/>
    </source>
</evidence>
<evidence type="ECO:0000255" key="5"/>
<evidence type="ECO:0000305" key="6"/>
<feature type="signal peptide" evidence="5">
    <location>
        <begin position="1"/>
        <end position="17"/>
    </location>
</feature>
<feature type="chain" id="PRO_0000041434" description="Protein Wnt-5b">
    <location>
        <begin position="18"/>
        <end position="359"/>
    </location>
</feature>
<feature type="lipid moiety-binding region" description="O-palmitoleoyl serine; by PORCN" evidence="4">
    <location>
        <position position="223"/>
    </location>
</feature>
<feature type="glycosylation site" description="N-linked (GlcNAc...) asparagine" evidence="5">
    <location>
        <position position="93"/>
    </location>
</feature>
<feature type="glycosylation site" description="N-linked (GlcNAc...) asparagine" evidence="5">
    <location>
        <position position="99"/>
    </location>
</feature>
<feature type="glycosylation site" description="N-linked (GlcNAc...) asparagine" evidence="5">
    <location>
        <position position="291"/>
    </location>
</feature>
<feature type="glycosylation site" description="N-linked (GlcNAc...) asparagine" evidence="5">
    <location>
        <position position="305"/>
    </location>
</feature>
<feature type="disulfide bond" evidence="3">
    <location>
        <begin position="83"/>
        <end position="94"/>
    </location>
</feature>
<feature type="disulfide bond" evidence="3">
    <location>
        <begin position="133"/>
        <end position="141"/>
    </location>
</feature>
<feature type="disulfide bond" evidence="3">
    <location>
        <begin position="143"/>
        <end position="161"/>
    </location>
</feature>
<feature type="disulfide bond" evidence="3">
    <location>
        <begin position="217"/>
        <end position="231"/>
    </location>
</feature>
<feature type="disulfide bond" evidence="3">
    <location>
        <begin position="219"/>
        <end position="226"/>
    </location>
</feature>
<feature type="disulfide bond" evidence="3">
    <location>
        <begin position="288"/>
        <end position="319"/>
    </location>
</feature>
<feature type="disulfide bond" evidence="3">
    <location>
        <begin position="304"/>
        <end position="314"/>
    </location>
</feature>
<feature type="disulfide bond" evidence="3">
    <location>
        <begin position="318"/>
        <end position="358"/>
    </location>
</feature>
<feature type="disulfide bond" evidence="3">
    <location>
        <begin position="334"/>
        <end position="349"/>
    </location>
</feature>
<feature type="disulfide bond" evidence="3">
    <location>
        <begin position="336"/>
        <end position="346"/>
    </location>
</feature>
<feature type="disulfide bond" evidence="3">
    <location>
        <begin position="341"/>
        <end position="342"/>
    </location>
</feature>
<feature type="sequence conflict" description="In Ref. 1; AAG38659." evidence="6" ref="1">
    <original>G</original>
    <variation>R</variation>
    <location>
        <position position="73"/>
    </location>
</feature>
<feature type="sequence conflict" description="In Ref. 1; AAG38659." evidence="6" ref="1">
    <original>R</original>
    <variation>P</variation>
    <location>
        <position position="88"/>
    </location>
</feature>
<feature type="sequence conflict" description="In Ref. 1; AAG38659." evidence="6" ref="1">
    <original>N</original>
    <variation>K</variation>
    <location>
        <position position="93"/>
    </location>
</feature>
<feature type="sequence conflict" description="In Ref. 1; AAG38659." evidence="6" ref="1">
    <original>R</original>
    <variation>S</variation>
    <location>
        <position position="134"/>
    </location>
</feature>
<feature type="sequence conflict" description="In Ref. 1; AAG38659." evidence="6" ref="1">
    <original>G</original>
    <variation>R</variation>
    <location>
        <position position="224"/>
    </location>
</feature>
<feature type="sequence conflict" description="In Ref. 1; AAG38659." evidence="6" ref="1">
    <original>S</original>
    <variation>R</variation>
    <location>
        <position position="227"/>
    </location>
</feature>
<protein>
    <recommendedName>
        <fullName>Protein Wnt-5b</fullName>
    </recommendedName>
</protein>
<accession>Q9H1J7</accession>
<accession>A8K315</accession>
<accession>D3DUP9</accession>
<accession>Q96S49</accession>
<accession>Q9BV04</accession>
<organism>
    <name type="scientific">Homo sapiens</name>
    <name type="common">Human</name>
    <dbReference type="NCBI Taxonomy" id="9606"/>
    <lineage>
        <taxon>Eukaryota</taxon>
        <taxon>Metazoa</taxon>
        <taxon>Chordata</taxon>
        <taxon>Craniata</taxon>
        <taxon>Vertebrata</taxon>
        <taxon>Euteleostomi</taxon>
        <taxon>Mammalia</taxon>
        <taxon>Eutheria</taxon>
        <taxon>Euarchontoglires</taxon>
        <taxon>Primates</taxon>
        <taxon>Haplorrhini</taxon>
        <taxon>Catarrhini</taxon>
        <taxon>Hominidae</taxon>
        <taxon>Homo</taxon>
    </lineage>
</organism>
<sequence>MPSLLLLFTAALLSSWAQLLTDANSWWSLALNPVQRPEMFIIGAQPVCSQLPGLSPGQRKLCQLYQEHMAYIGEGAKTGIKECQHQFRQRRWNCSTADNASVFGRVMQIGSRETAFTHAVSAAGVVNAISRACREGELSTCGCSRTARPKDLPRDWLWGGCGDNVEYGYRFAKEFVDAREREKNFAKGSEEQGRVLMNLQNNEAGRRAVYKMADVACKCHGVSGSCSLKTCWLQLAEFRKVGDRLKEKYDSAAAMRVTRKGRLELVNSRFTQPTPEDLVYVDPSPDYCLRNESTGSLGTQGRLCNKTSEGMDGCELMCCGRGYNQFKSVQVERCHCKFHWCCFVRCKKCTEIVDQYICK</sequence>
<keyword id="KW-0217">Developmental protein</keyword>
<keyword id="KW-1015">Disulfide bond</keyword>
<keyword id="KW-0272">Extracellular matrix</keyword>
<keyword id="KW-0325">Glycoprotein</keyword>
<keyword id="KW-0449">Lipoprotein</keyword>
<keyword id="KW-1267">Proteomics identification</keyword>
<keyword id="KW-1185">Reference proteome</keyword>
<keyword id="KW-0964">Secreted</keyword>
<keyword id="KW-0732">Signal</keyword>
<keyword id="KW-0879">Wnt signaling pathway</keyword>
<proteinExistence type="evidence at protein level"/>
<name>WNT5B_HUMAN</name>
<reference key="1">
    <citation type="submission" date="2000-08" db="EMBL/GenBank/DDBJ databases">
        <title>Molecular cloning and characterization of six novel human WNT genes.</title>
        <authorList>
            <person name="Testa T.T."/>
            <person name="Mossakowska D.E."/>
            <person name="Carter P.S."/>
            <person name="Hu E."/>
            <person name="Zhu Y."/>
            <person name="Kelsell D.P."/>
            <person name="Murdock P.R."/>
            <person name="Herrity N.C."/>
            <person name="Lewis C.J."/>
            <person name="Cross D.A."/>
            <person name="Culbert A.A."/>
            <person name="Reith A.D."/>
            <person name="Barnes M.R."/>
        </authorList>
    </citation>
    <scope>NUCLEOTIDE SEQUENCE [MRNA]</scope>
</reference>
<reference key="2">
    <citation type="journal article" date="2001" name="Int. J. Oncol.">
        <title>Molecular cloning and characterization of human WNT5B on chromosome 12p13.3 region.</title>
        <authorList>
            <person name="Saitoh T."/>
            <person name="Katoh M."/>
        </authorList>
    </citation>
    <scope>NUCLEOTIDE SEQUENCE [MRNA]</scope>
</reference>
<reference key="3">
    <citation type="journal article" date="2004" name="Nat. Genet.">
        <title>Complete sequencing and characterization of 21,243 full-length human cDNAs.</title>
        <authorList>
            <person name="Ota T."/>
            <person name="Suzuki Y."/>
            <person name="Nishikawa T."/>
            <person name="Otsuki T."/>
            <person name="Sugiyama T."/>
            <person name="Irie R."/>
            <person name="Wakamatsu A."/>
            <person name="Hayashi K."/>
            <person name="Sato H."/>
            <person name="Nagai K."/>
            <person name="Kimura K."/>
            <person name="Makita H."/>
            <person name="Sekine M."/>
            <person name="Obayashi M."/>
            <person name="Nishi T."/>
            <person name="Shibahara T."/>
            <person name="Tanaka T."/>
            <person name="Ishii S."/>
            <person name="Yamamoto J."/>
            <person name="Saito K."/>
            <person name="Kawai Y."/>
            <person name="Isono Y."/>
            <person name="Nakamura Y."/>
            <person name="Nagahari K."/>
            <person name="Murakami K."/>
            <person name="Yasuda T."/>
            <person name="Iwayanagi T."/>
            <person name="Wagatsuma M."/>
            <person name="Shiratori A."/>
            <person name="Sudo H."/>
            <person name="Hosoiri T."/>
            <person name="Kaku Y."/>
            <person name="Kodaira H."/>
            <person name="Kondo H."/>
            <person name="Sugawara M."/>
            <person name="Takahashi M."/>
            <person name="Kanda K."/>
            <person name="Yokoi T."/>
            <person name="Furuya T."/>
            <person name="Kikkawa E."/>
            <person name="Omura Y."/>
            <person name="Abe K."/>
            <person name="Kamihara K."/>
            <person name="Katsuta N."/>
            <person name="Sato K."/>
            <person name="Tanikawa M."/>
            <person name="Yamazaki M."/>
            <person name="Ninomiya K."/>
            <person name="Ishibashi T."/>
            <person name="Yamashita H."/>
            <person name="Murakawa K."/>
            <person name="Fujimori K."/>
            <person name="Tanai H."/>
            <person name="Kimata M."/>
            <person name="Watanabe M."/>
            <person name="Hiraoka S."/>
            <person name="Chiba Y."/>
            <person name="Ishida S."/>
            <person name="Ono Y."/>
            <person name="Takiguchi S."/>
            <person name="Watanabe S."/>
            <person name="Yosida M."/>
            <person name="Hotuta T."/>
            <person name="Kusano J."/>
            <person name="Kanehori K."/>
            <person name="Takahashi-Fujii A."/>
            <person name="Hara H."/>
            <person name="Tanase T.-O."/>
            <person name="Nomura Y."/>
            <person name="Togiya S."/>
            <person name="Komai F."/>
            <person name="Hara R."/>
            <person name="Takeuchi K."/>
            <person name="Arita M."/>
            <person name="Imose N."/>
            <person name="Musashino K."/>
            <person name="Yuuki H."/>
            <person name="Oshima A."/>
            <person name="Sasaki N."/>
            <person name="Aotsuka S."/>
            <person name="Yoshikawa Y."/>
            <person name="Matsunawa H."/>
            <person name="Ichihara T."/>
            <person name="Shiohata N."/>
            <person name="Sano S."/>
            <person name="Moriya S."/>
            <person name="Momiyama H."/>
            <person name="Satoh N."/>
            <person name="Takami S."/>
            <person name="Terashima Y."/>
            <person name="Suzuki O."/>
            <person name="Nakagawa S."/>
            <person name="Senoh A."/>
            <person name="Mizoguchi H."/>
            <person name="Goto Y."/>
            <person name="Shimizu F."/>
            <person name="Wakebe H."/>
            <person name="Hishigaki H."/>
            <person name="Watanabe T."/>
            <person name="Sugiyama A."/>
            <person name="Takemoto M."/>
            <person name="Kawakami B."/>
            <person name="Yamazaki M."/>
            <person name="Watanabe K."/>
            <person name="Kumagai A."/>
            <person name="Itakura S."/>
            <person name="Fukuzumi Y."/>
            <person name="Fujimori Y."/>
            <person name="Komiyama M."/>
            <person name="Tashiro H."/>
            <person name="Tanigami A."/>
            <person name="Fujiwara T."/>
            <person name="Ono T."/>
            <person name="Yamada K."/>
            <person name="Fujii Y."/>
            <person name="Ozaki K."/>
            <person name="Hirao M."/>
            <person name="Ohmori Y."/>
            <person name="Kawabata A."/>
            <person name="Hikiji T."/>
            <person name="Kobatake N."/>
            <person name="Inagaki H."/>
            <person name="Ikema Y."/>
            <person name="Okamoto S."/>
            <person name="Okitani R."/>
            <person name="Kawakami T."/>
            <person name="Noguchi S."/>
            <person name="Itoh T."/>
            <person name="Shigeta K."/>
            <person name="Senba T."/>
            <person name="Matsumura K."/>
            <person name="Nakajima Y."/>
            <person name="Mizuno T."/>
            <person name="Morinaga M."/>
            <person name="Sasaki M."/>
            <person name="Togashi T."/>
            <person name="Oyama M."/>
            <person name="Hata H."/>
            <person name="Watanabe M."/>
            <person name="Komatsu T."/>
            <person name="Mizushima-Sugano J."/>
            <person name="Satoh T."/>
            <person name="Shirai Y."/>
            <person name="Takahashi Y."/>
            <person name="Nakagawa K."/>
            <person name="Okumura K."/>
            <person name="Nagase T."/>
            <person name="Nomura N."/>
            <person name="Kikuchi H."/>
            <person name="Masuho Y."/>
            <person name="Yamashita R."/>
            <person name="Nakai K."/>
            <person name="Yada T."/>
            <person name="Nakamura Y."/>
            <person name="Ohara O."/>
            <person name="Isogai T."/>
            <person name="Sugano S."/>
        </authorList>
    </citation>
    <scope>NUCLEOTIDE SEQUENCE [LARGE SCALE MRNA]</scope>
</reference>
<reference key="4">
    <citation type="submission" date="2005-09" db="EMBL/GenBank/DDBJ databases">
        <authorList>
            <person name="Mural R.J."/>
            <person name="Istrail S."/>
            <person name="Sutton G.G."/>
            <person name="Florea L."/>
            <person name="Halpern A.L."/>
            <person name="Mobarry C.M."/>
            <person name="Lippert R."/>
            <person name="Walenz B."/>
            <person name="Shatkay H."/>
            <person name="Dew I."/>
            <person name="Miller J.R."/>
            <person name="Flanigan M.J."/>
            <person name="Edwards N.J."/>
            <person name="Bolanos R."/>
            <person name="Fasulo D."/>
            <person name="Halldorsson B.V."/>
            <person name="Hannenhalli S."/>
            <person name="Turner R."/>
            <person name="Yooseph S."/>
            <person name="Lu F."/>
            <person name="Nusskern D.R."/>
            <person name="Shue B.C."/>
            <person name="Zheng X.H."/>
            <person name="Zhong F."/>
            <person name="Delcher A.L."/>
            <person name="Huson D.H."/>
            <person name="Kravitz S.A."/>
            <person name="Mouchard L."/>
            <person name="Reinert K."/>
            <person name="Remington K.A."/>
            <person name="Clark A.G."/>
            <person name="Waterman M.S."/>
            <person name="Eichler E.E."/>
            <person name="Adams M.D."/>
            <person name="Hunkapiller M.W."/>
            <person name="Myers E.W."/>
            <person name="Venter J.C."/>
        </authorList>
    </citation>
    <scope>NUCLEOTIDE SEQUENCE [LARGE SCALE GENOMIC DNA]</scope>
</reference>
<reference key="5">
    <citation type="journal article" date="2004" name="Genome Res.">
        <title>The status, quality, and expansion of the NIH full-length cDNA project: the Mammalian Gene Collection (MGC).</title>
        <authorList>
            <consortium name="The MGC Project Team"/>
        </authorList>
    </citation>
    <scope>NUCLEOTIDE SEQUENCE [LARGE SCALE MRNA]</scope>
    <source>
        <tissue>Muscle</tissue>
    </source>
</reference>
<comment type="function">
    <text evidence="1">Ligand for members of the frizzled family of seven transmembrane receptors. Probable developmental protein. May be a signaling molecule which affects the development of discrete regions of tissues. Is likely to signal over only few cell diameters (By similarity).</text>
</comment>
<comment type="subunit">
    <text evidence="1">Interacts with PORCN.</text>
</comment>
<comment type="subcellular location">
    <subcellularLocation>
        <location>Secreted</location>
        <location>Extracellular space</location>
        <location>Extracellular matrix</location>
    </subcellularLocation>
</comment>
<comment type="PTM">
    <text evidence="2 4">Palmitoleoylation is required for efficient binding to frizzled receptors. Depalmitoleoylation leads to Wnt signaling pathway inhibition.</text>
</comment>
<comment type="similarity">
    <text evidence="6">Belongs to the Wnt family.</text>
</comment>
<dbReference type="EMBL" id="AY009399">
    <property type="protein sequence ID" value="AAG38659.1"/>
    <property type="molecule type" value="mRNA"/>
</dbReference>
<dbReference type="EMBL" id="AB060966">
    <property type="protein sequence ID" value="BAB62039.1"/>
    <property type="molecule type" value="mRNA"/>
</dbReference>
<dbReference type="EMBL" id="AK290430">
    <property type="protein sequence ID" value="BAF83119.1"/>
    <property type="molecule type" value="mRNA"/>
</dbReference>
<dbReference type="EMBL" id="CH471116">
    <property type="protein sequence ID" value="EAW88925.1"/>
    <property type="molecule type" value="Genomic_DNA"/>
</dbReference>
<dbReference type="EMBL" id="CH471116">
    <property type="protein sequence ID" value="EAW88927.1"/>
    <property type="molecule type" value="Genomic_DNA"/>
</dbReference>
<dbReference type="EMBL" id="BC001749">
    <property type="protein sequence ID" value="AAH01749.1"/>
    <property type="molecule type" value="mRNA"/>
</dbReference>
<dbReference type="CCDS" id="CCDS8510.1"/>
<dbReference type="RefSeq" id="NP_110402.2">
    <property type="nucleotide sequence ID" value="NM_030775.2"/>
</dbReference>
<dbReference type="RefSeq" id="NP_116031.1">
    <property type="nucleotide sequence ID" value="NM_032642.3"/>
</dbReference>
<dbReference type="SMR" id="Q9H1J7"/>
<dbReference type="BioGRID" id="123348">
    <property type="interactions" value="4"/>
</dbReference>
<dbReference type="FunCoup" id="Q9H1J7">
    <property type="interactions" value="641"/>
</dbReference>
<dbReference type="IntAct" id="Q9H1J7">
    <property type="interactions" value="4"/>
</dbReference>
<dbReference type="STRING" id="9606.ENSP00000380379"/>
<dbReference type="GlyCosmos" id="Q9H1J7">
    <property type="glycosylation" value="4 sites, No reported glycans"/>
</dbReference>
<dbReference type="GlyGen" id="Q9H1J7">
    <property type="glycosylation" value="6 sites, 2 N-linked glycans (2 sites), 1 O-linked glycan (2 sites)"/>
</dbReference>
<dbReference type="iPTMnet" id="Q9H1J7"/>
<dbReference type="PhosphoSitePlus" id="Q9H1J7"/>
<dbReference type="BioMuta" id="WNT5B"/>
<dbReference type="DMDM" id="20532427"/>
<dbReference type="jPOST" id="Q9H1J7"/>
<dbReference type="MassIVE" id="Q9H1J7"/>
<dbReference type="PaxDb" id="9606-ENSP00000380379"/>
<dbReference type="PeptideAtlas" id="Q9H1J7"/>
<dbReference type="ProteomicsDB" id="80420"/>
<dbReference type="Pumba" id="Q9H1J7"/>
<dbReference type="Antibodypedia" id="10357">
    <property type="antibodies" value="246 antibodies from 31 providers"/>
</dbReference>
<dbReference type="DNASU" id="81029"/>
<dbReference type="Ensembl" id="ENST00000310594.7">
    <property type="protein sequence ID" value="ENSP00000308887.3"/>
    <property type="gene ID" value="ENSG00000111186.13"/>
</dbReference>
<dbReference type="Ensembl" id="ENST00000397196.7">
    <property type="protein sequence ID" value="ENSP00000380379.2"/>
    <property type="gene ID" value="ENSG00000111186.13"/>
</dbReference>
<dbReference type="Ensembl" id="ENST00000537031.5">
    <property type="protein sequence ID" value="ENSP00000439312.1"/>
    <property type="gene ID" value="ENSG00000111186.13"/>
</dbReference>
<dbReference type="GeneID" id="81029"/>
<dbReference type="KEGG" id="hsa:81029"/>
<dbReference type="MANE-Select" id="ENST00000397196.7">
    <property type="protein sequence ID" value="ENSP00000380379.2"/>
    <property type="RefSeq nucleotide sequence ID" value="NM_032642.3"/>
    <property type="RefSeq protein sequence ID" value="NP_116031.1"/>
</dbReference>
<dbReference type="UCSC" id="uc001qjj.4">
    <property type="organism name" value="human"/>
</dbReference>
<dbReference type="AGR" id="HGNC:16265"/>
<dbReference type="CTD" id="81029"/>
<dbReference type="DisGeNET" id="81029"/>
<dbReference type="GeneCards" id="WNT5B"/>
<dbReference type="HGNC" id="HGNC:16265">
    <property type="gene designation" value="WNT5B"/>
</dbReference>
<dbReference type="HPA" id="ENSG00000111186">
    <property type="expression patterns" value="Tissue enhanced (prostate)"/>
</dbReference>
<dbReference type="MIM" id="606361">
    <property type="type" value="gene"/>
</dbReference>
<dbReference type="neXtProt" id="NX_Q9H1J7"/>
<dbReference type="OpenTargets" id="ENSG00000111186"/>
<dbReference type="PharmGKB" id="PA38104"/>
<dbReference type="VEuPathDB" id="HostDB:ENSG00000111186"/>
<dbReference type="eggNOG" id="KOG3913">
    <property type="taxonomic scope" value="Eukaryota"/>
</dbReference>
<dbReference type="GeneTree" id="ENSGT00940000157617"/>
<dbReference type="HOGENOM" id="CLU_033039_0_1_1"/>
<dbReference type="InParanoid" id="Q9H1J7"/>
<dbReference type="OMA" id="IQVERCH"/>
<dbReference type="OrthoDB" id="5945655at2759"/>
<dbReference type="PAN-GO" id="Q9H1J7">
    <property type="GO annotations" value="6 GO annotations based on evolutionary models"/>
</dbReference>
<dbReference type="PhylomeDB" id="Q9H1J7"/>
<dbReference type="TreeFam" id="TF105310"/>
<dbReference type="PathwayCommons" id="Q9H1J7"/>
<dbReference type="Reactome" id="R-HSA-3238698">
    <property type="pathway name" value="WNT ligand biogenesis and trafficking"/>
</dbReference>
<dbReference type="Reactome" id="R-HSA-4086400">
    <property type="pathway name" value="PCP/CE pathway"/>
</dbReference>
<dbReference type="SignaLink" id="Q9H1J7"/>
<dbReference type="SIGNOR" id="Q9H1J7"/>
<dbReference type="BioGRID-ORCS" id="81029">
    <property type="hits" value="23 hits in 1159 CRISPR screens"/>
</dbReference>
<dbReference type="ChiTaRS" id="WNT5B">
    <property type="organism name" value="human"/>
</dbReference>
<dbReference type="GeneWiki" id="WNT5B"/>
<dbReference type="GenomeRNAi" id="81029"/>
<dbReference type="Pharos" id="Q9H1J7">
    <property type="development level" value="Tbio"/>
</dbReference>
<dbReference type="PRO" id="PR:Q9H1J7"/>
<dbReference type="Proteomes" id="UP000005640">
    <property type="component" value="Chromosome 12"/>
</dbReference>
<dbReference type="RNAct" id="Q9H1J7">
    <property type="molecule type" value="protein"/>
</dbReference>
<dbReference type="Bgee" id="ENSG00000111186">
    <property type="expression patterns" value="Expressed in stromal cell of endometrium and 114 other cell types or tissues"/>
</dbReference>
<dbReference type="ExpressionAtlas" id="Q9H1J7">
    <property type="expression patterns" value="baseline and differential"/>
</dbReference>
<dbReference type="GO" id="GO:0009986">
    <property type="term" value="C:cell surface"/>
    <property type="evidence" value="ECO:0007669"/>
    <property type="project" value="Ensembl"/>
</dbReference>
<dbReference type="GO" id="GO:0030666">
    <property type="term" value="C:endocytic vesicle membrane"/>
    <property type="evidence" value="ECO:0000304"/>
    <property type="project" value="Reactome"/>
</dbReference>
<dbReference type="GO" id="GO:0005788">
    <property type="term" value="C:endoplasmic reticulum lumen"/>
    <property type="evidence" value="ECO:0000304"/>
    <property type="project" value="Reactome"/>
</dbReference>
<dbReference type="GO" id="GO:0070062">
    <property type="term" value="C:extracellular exosome"/>
    <property type="evidence" value="ECO:0007005"/>
    <property type="project" value="UniProtKB"/>
</dbReference>
<dbReference type="GO" id="GO:0031012">
    <property type="term" value="C:extracellular matrix"/>
    <property type="evidence" value="ECO:0007669"/>
    <property type="project" value="Ensembl"/>
</dbReference>
<dbReference type="GO" id="GO:0005576">
    <property type="term" value="C:extracellular region"/>
    <property type="evidence" value="ECO:0000304"/>
    <property type="project" value="Reactome"/>
</dbReference>
<dbReference type="GO" id="GO:0005615">
    <property type="term" value="C:extracellular space"/>
    <property type="evidence" value="ECO:0000318"/>
    <property type="project" value="GO_Central"/>
</dbReference>
<dbReference type="GO" id="GO:0005796">
    <property type="term" value="C:Golgi lumen"/>
    <property type="evidence" value="ECO:0000304"/>
    <property type="project" value="Reactome"/>
</dbReference>
<dbReference type="GO" id="GO:0005886">
    <property type="term" value="C:plasma membrane"/>
    <property type="evidence" value="ECO:0000304"/>
    <property type="project" value="Reactome"/>
</dbReference>
<dbReference type="GO" id="GO:0005125">
    <property type="term" value="F:cytokine activity"/>
    <property type="evidence" value="ECO:0000318"/>
    <property type="project" value="GO_Central"/>
</dbReference>
<dbReference type="GO" id="GO:0005109">
    <property type="term" value="F:frizzled binding"/>
    <property type="evidence" value="ECO:0000318"/>
    <property type="project" value="GO_Central"/>
</dbReference>
<dbReference type="GO" id="GO:0005102">
    <property type="term" value="F:signaling receptor binding"/>
    <property type="evidence" value="ECO:0000353"/>
    <property type="project" value="UniProtKB"/>
</dbReference>
<dbReference type="GO" id="GO:0060070">
    <property type="term" value="P:canonical Wnt signaling pathway"/>
    <property type="evidence" value="ECO:0000318"/>
    <property type="project" value="GO_Central"/>
</dbReference>
<dbReference type="GO" id="GO:0045165">
    <property type="term" value="P:cell fate commitment"/>
    <property type="evidence" value="ECO:0000318"/>
    <property type="project" value="GO_Central"/>
</dbReference>
<dbReference type="GO" id="GO:0071300">
    <property type="term" value="P:cellular response to retinoic acid"/>
    <property type="evidence" value="ECO:0000250"/>
    <property type="project" value="UniProtKB"/>
</dbReference>
<dbReference type="GO" id="GO:0002062">
    <property type="term" value="P:chondrocyte differentiation"/>
    <property type="evidence" value="ECO:0000270"/>
    <property type="project" value="UniProtKB"/>
</dbReference>
<dbReference type="GO" id="GO:0045444">
    <property type="term" value="P:fat cell differentiation"/>
    <property type="evidence" value="ECO:0000303"/>
    <property type="project" value="UniProtKB"/>
</dbReference>
<dbReference type="GO" id="GO:0070307">
    <property type="term" value="P:lens fiber cell development"/>
    <property type="evidence" value="ECO:0000250"/>
    <property type="project" value="BHF-UCL"/>
</dbReference>
<dbReference type="GO" id="GO:0042692">
    <property type="term" value="P:muscle cell differentiation"/>
    <property type="evidence" value="ECO:0000250"/>
    <property type="project" value="UniProtKB"/>
</dbReference>
<dbReference type="GO" id="GO:0090090">
    <property type="term" value="P:negative regulation of canonical Wnt signaling pathway"/>
    <property type="evidence" value="ECO:0007669"/>
    <property type="project" value="Ensembl"/>
</dbReference>
<dbReference type="GO" id="GO:0030182">
    <property type="term" value="P:neuron differentiation"/>
    <property type="evidence" value="ECO:0000250"/>
    <property type="project" value="UniProtKB"/>
</dbReference>
<dbReference type="GO" id="GO:0030335">
    <property type="term" value="P:positive regulation of cell migration"/>
    <property type="evidence" value="ECO:0000314"/>
    <property type="project" value="UniProtKB"/>
</dbReference>
<dbReference type="GO" id="GO:1904105">
    <property type="term" value="P:positive regulation of convergent extension involved in gastrulation"/>
    <property type="evidence" value="ECO:0000250"/>
    <property type="project" value="UniProtKB"/>
</dbReference>
<dbReference type="GO" id="GO:0045600">
    <property type="term" value="P:positive regulation of fat cell differentiation"/>
    <property type="evidence" value="ECO:0007669"/>
    <property type="project" value="Ensembl"/>
</dbReference>
<dbReference type="GO" id="GO:2000052">
    <property type="term" value="P:positive regulation of non-canonical Wnt signaling pathway"/>
    <property type="evidence" value="ECO:0000250"/>
    <property type="project" value="UniProtKB"/>
</dbReference>
<dbReference type="CDD" id="cd19348">
    <property type="entry name" value="Wnt_Wnt5b"/>
    <property type="match status" value="1"/>
</dbReference>
<dbReference type="FunFam" id="3.30.2460.20:FF:000001">
    <property type="entry name" value="Wnt homolog"/>
    <property type="match status" value="1"/>
</dbReference>
<dbReference type="Gene3D" id="3.30.2460.20">
    <property type="match status" value="1"/>
</dbReference>
<dbReference type="InterPro" id="IPR005817">
    <property type="entry name" value="Wnt"/>
</dbReference>
<dbReference type="InterPro" id="IPR043158">
    <property type="entry name" value="Wnt_C"/>
</dbReference>
<dbReference type="InterPro" id="IPR018161">
    <property type="entry name" value="Wnt_CS"/>
</dbReference>
<dbReference type="PANTHER" id="PTHR12027:SF87">
    <property type="entry name" value="PROTEIN WNT-5B"/>
    <property type="match status" value="1"/>
</dbReference>
<dbReference type="PANTHER" id="PTHR12027">
    <property type="entry name" value="WNT RELATED"/>
    <property type="match status" value="1"/>
</dbReference>
<dbReference type="Pfam" id="PF00110">
    <property type="entry name" value="wnt"/>
    <property type="match status" value="1"/>
</dbReference>
<dbReference type="PRINTS" id="PR01349">
    <property type="entry name" value="WNTPROTEIN"/>
</dbReference>
<dbReference type="SMART" id="SM00097">
    <property type="entry name" value="WNT1"/>
    <property type="match status" value="1"/>
</dbReference>
<dbReference type="PROSITE" id="PS00246">
    <property type="entry name" value="WNT1"/>
    <property type="match status" value="1"/>
</dbReference>
<gene>
    <name type="primary">WNT5B</name>
</gene>